<keyword id="KW-0002">3D-structure</keyword>
<keyword id="KW-0025">Alternative splicing</keyword>
<keyword id="KW-1003">Cell membrane</keyword>
<keyword id="KW-0168">Coated pit</keyword>
<keyword id="KW-0225">Disease variant</keyword>
<keyword id="KW-0254">Endocytosis</keyword>
<keyword id="KW-0472">Membrane</keyword>
<keyword id="KW-0597">Phosphoprotein</keyword>
<keyword id="KW-0653">Protein transport</keyword>
<keyword id="KW-1267">Proteomics identification</keyword>
<keyword id="KW-1185">Reference proteome</keyword>
<keyword id="KW-0813">Transport</keyword>
<reference key="1">
    <citation type="journal article" date="1996" name="Cytogenet. Cell Genet.">
        <title>Human CLAPS2 encoding AP17, a small chain of the clathrin-associated protein complex: cDNA cloning and chromosomal assignment to 19q13.2--&gt;q13.3.</title>
        <authorList>
            <person name="Winterpacht A."/>
            <person name="Endele S."/>
            <person name="Enklaar T."/>
            <person name="Fuhry M."/>
            <person name="Zabel B."/>
        </authorList>
    </citation>
    <scope>NUCLEOTIDE SEQUENCE [MRNA] (ISOFORM 1)</scope>
    <source>
        <tissue>Kidney</tissue>
    </source>
</reference>
<reference key="2">
    <citation type="journal article" date="1998" name="Gene">
        <title>A novel spliced transcript of human CLAPS2 encoding a protein alternative to clathrin adaptor protein AP17.</title>
        <authorList>
            <person name="Holzmann K."/>
            <person name="Poeltl A."/>
            <person name="Sauermann G."/>
        </authorList>
    </citation>
    <scope>NUCLEOTIDE SEQUENCE [MRNA] (ISOFORMS 1 AND 2)</scope>
</reference>
<reference key="3">
    <citation type="journal article" date="2004" name="Nat. Genet.">
        <title>Complete sequencing and characterization of 21,243 full-length human cDNAs.</title>
        <authorList>
            <person name="Ota T."/>
            <person name="Suzuki Y."/>
            <person name="Nishikawa T."/>
            <person name="Otsuki T."/>
            <person name="Sugiyama T."/>
            <person name="Irie R."/>
            <person name="Wakamatsu A."/>
            <person name="Hayashi K."/>
            <person name="Sato H."/>
            <person name="Nagai K."/>
            <person name="Kimura K."/>
            <person name="Makita H."/>
            <person name="Sekine M."/>
            <person name="Obayashi M."/>
            <person name="Nishi T."/>
            <person name="Shibahara T."/>
            <person name="Tanaka T."/>
            <person name="Ishii S."/>
            <person name="Yamamoto J."/>
            <person name="Saito K."/>
            <person name="Kawai Y."/>
            <person name="Isono Y."/>
            <person name="Nakamura Y."/>
            <person name="Nagahari K."/>
            <person name="Murakami K."/>
            <person name="Yasuda T."/>
            <person name="Iwayanagi T."/>
            <person name="Wagatsuma M."/>
            <person name="Shiratori A."/>
            <person name="Sudo H."/>
            <person name="Hosoiri T."/>
            <person name="Kaku Y."/>
            <person name="Kodaira H."/>
            <person name="Kondo H."/>
            <person name="Sugawara M."/>
            <person name="Takahashi M."/>
            <person name="Kanda K."/>
            <person name="Yokoi T."/>
            <person name="Furuya T."/>
            <person name="Kikkawa E."/>
            <person name="Omura Y."/>
            <person name="Abe K."/>
            <person name="Kamihara K."/>
            <person name="Katsuta N."/>
            <person name="Sato K."/>
            <person name="Tanikawa M."/>
            <person name="Yamazaki M."/>
            <person name="Ninomiya K."/>
            <person name="Ishibashi T."/>
            <person name="Yamashita H."/>
            <person name="Murakawa K."/>
            <person name="Fujimori K."/>
            <person name="Tanai H."/>
            <person name="Kimata M."/>
            <person name="Watanabe M."/>
            <person name="Hiraoka S."/>
            <person name="Chiba Y."/>
            <person name="Ishida S."/>
            <person name="Ono Y."/>
            <person name="Takiguchi S."/>
            <person name="Watanabe S."/>
            <person name="Yosida M."/>
            <person name="Hotuta T."/>
            <person name="Kusano J."/>
            <person name="Kanehori K."/>
            <person name="Takahashi-Fujii A."/>
            <person name="Hara H."/>
            <person name="Tanase T.-O."/>
            <person name="Nomura Y."/>
            <person name="Togiya S."/>
            <person name="Komai F."/>
            <person name="Hara R."/>
            <person name="Takeuchi K."/>
            <person name="Arita M."/>
            <person name="Imose N."/>
            <person name="Musashino K."/>
            <person name="Yuuki H."/>
            <person name="Oshima A."/>
            <person name="Sasaki N."/>
            <person name="Aotsuka S."/>
            <person name="Yoshikawa Y."/>
            <person name="Matsunawa H."/>
            <person name="Ichihara T."/>
            <person name="Shiohata N."/>
            <person name="Sano S."/>
            <person name="Moriya S."/>
            <person name="Momiyama H."/>
            <person name="Satoh N."/>
            <person name="Takami S."/>
            <person name="Terashima Y."/>
            <person name="Suzuki O."/>
            <person name="Nakagawa S."/>
            <person name="Senoh A."/>
            <person name="Mizoguchi H."/>
            <person name="Goto Y."/>
            <person name="Shimizu F."/>
            <person name="Wakebe H."/>
            <person name="Hishigaki H."/>
            <person name="Watanabe T."/>
            <person name="Sugiyama A."/>
            <person name="Takemoto M."/>
            <person name="Kawakami B."/>
            <person name="Yamazaki M."/>
            <person name="Watanabe K."/>
            <person name="Kumagai A."/>
            <person name="Itakura S."/>
            <person name="Fukuzumi Y."/>
            <person name="Fujimori Y."/>
            <person name="Komiyama M."/>
            <person name="Tashiro H."/>
            <person name="Tanigami A."/>
            <person name="Fujiwara T."/>
            <person name="Ono T."/>
            <person name="Yamada K."/>
            <person name="Fujii Y."/>
            <person name="Ozaki K."/>
            <person name="Hirao M."/>
            <person name="Ohmori Y."/>
            <person name="Kawabata A."/>
            <person name="Hikiji T."/>
            <person name="Kobatake N."/>
            <person name="Inagaki H."/>
            <person name="Ikema Y."/>
            <person name="Okamoto S."/>
            <person name="Okitani R."/>
            <person name="Kawakami T."/>
            <person name="Noguchi S."/>
            <person name="Itoh T."/>
            <person name="Shigeta K."/>
            <person name="Senba T."/>
            <person name="Matsumura K."/>
            <person name="Nakajima Y."/>
            <person name="Mizuno T."/>
            <person name="Morinaga M."/>
            <person name="Sasaki M."/>
            <person name="Togashi T."/>
            <person name="Oyama M."/>
            <person name="Hata H."/>
            <person name="Watanabe M."/>
            <person name="Komatsu T."/>
            <person name="Mizushima-Sugano J."/>
            <person name="Satoh T."/>
            <person name="Shirai Y."/>
            <person name="Takahashi Y."/>
            <person name="Nakagawa K."/>
            <person name="Okumura K."/>
            <person name="Nagase T."/>
            <person name="Nomura N."/>
            <person name="Kikuchi H."/>
            <person name="Masuho Y."/>
            <person name="Yamashita R."/>
            <person name="Nakai K."/>
            <person name="Yada T."/>
            <person name="Nakamura Y."/>
            <person name="Ohara O."/>
            <person name="Isogai T."/>
            <person name="Sugano S."/>
        </authorList>
    </citation>
    <scope>NUCLEOTIDE SEQUENCE [LARGE SCALE MRNA] (ISOFORM 1)</scope>
    <source>
        <tissue>Tongue</tissue>
    </source>
</reference>
<reference key="4">
    <citation type="submission" date="2005-07" db="EMBL/GenBank/DDBJ databases">
        <authorList>
            <person name="Mural R.J."/>
            <person name="Istrail S."/>
            <person name="Sutton G.G."/>
            <person name="Florea L."/>
            <person name="Halpern A.L."/>
            <person name="Mobarry C.M."/>
            <person name="Lippert R."/>
            <person name="Walenz B."/>
            <person name="Shatkay H."/>
            <person name="Dew I."/>
            <person name="Miller J.R."/>
            <person name="Flanigan M.J."/>
            <person name="Edwards N.J."/>
            <person name="Bolanos R."/>
            <person name="Fasulo D."/>
            <person name="Halldorsson B.V."/>
            <person name="Hannenhalli S."/>
            <person name="Turner R."/>
            <person name="Yooseph S."/>
            <person name="Lu F."/>
            <person name="Nusskern D.R."/>
            <person name="Shue B.C."/>
            <person name="Zheng X.H."/>
            <person name="Zhong F."/>
            <person name="Delcher A.L."/>
            <person name="Huson D.H."/>
            <person name="Kravitz S.A."/>
            <person name="Mouchard L."/>
            <person name="Reinert K."/>
            <person name="Remington K.A."/>
            <person name="Clark A.G."/>
            <person name="Waterman M.S."/>
            <person name="Eichler E.E."/>
            <person name="Adams M.D."/>
            <person name="Hunkapiller M.W."/>
            <person name="Myers E.W."/>
            <person name="Venter J.C."/>
        </authorList>
    </citation>
    <scope>NUCLEOTIDE SEQUENCE [LARGE SCALE GENOMIC DNA]</scope>
</reference>
<reference key="5">
    <citation type="journal article" date="2004" name="Genome Res.">
        <title>The status, quality, and expansion of the NIH full-length cDNA project: the Mammalian Gene Collection (MGC).</title>
        <authorList>
            <consortium name="The MGC Project Team"/>
        </authorList>
    </citation>
    <scope>NUCLEOTIDE SEQUENCE [LARGE SCALE MRNA] (ISOFORM 1)</scope>
    <source>
        <tissue>Uterus</tissue>
    </source>
</reference>
<reference key="6">
    <citation type="journal article" date="2003" name="Cell Struct. Funct.">
        <title>Adaptor protein complexes as the key regulators of protein sorting in the post-Golgi network.</title>
        <authorList>
            <person name="Nakatsu F."/>
            <person name="Ohno H."/>
        </authorList>
    </citation>
    <scope>FUNCTION OF THE AP-2 COMPLEX IN CLATHRIN-MEDIATED ENDOCYTOSIS</scope>
</reference>
<reference key="7">
    <citation type="journal article" date="2004" name="Annu. Rev. Cell Dev. Biol.">
        <title>Adaptors for clathrin coats: structure and function.</title>
        <authorList>
            <person name="Owen D.J."/>
            <person name="Collins B.M."/>
            <person name="Evans P.R."/>
        </authorList>
    </citation>
    <scope>FUNCTION OF THE AP-2 COMPLEX IN CLATHRIN-MEDIATED ENDOCYTOSIS</scope>
</reference>
<reference key="8">
    <citation type="journal article" date="2008" name="J. Cell Sci.">
        <title>The adaptor complex AP-2 regulates post-endocytic trafficking through the non-clathrin Arf6-dependent endocytic pathway.</title>
        <authorList>
            <person name="Lau A.W."/>
            <person name="Chou M.M."/>
        </authorList>
    </citation>
    <scope>FUNCTION OF THE AP-2 COMPLEX IN NON-CLATHRIN-DEPENDENT ENDOCYTOSIS</scope>
</reference>
<reference key="9">
    <citation type="journal article" date="2008" name="Mol. Cell">
        <title>Kinase-selective enrichment enables quantitative phosphoproteomics of the kinome across the cell cycle.</title>
        <authorList>
            <person name="Daub H."/>
            <person name="Olsen J.V."/>
            <person name="Bairlein M."/>
            <person name="Gnad F."/>
            <person name="Oppermann F.S."/>
            <person name="Korner R."/>
            <person name="Greff Z."/>
            <person name="Keri G."/>
            <person name="Stemmann O."/>
            <person name="Mann M."/>
        </authorList>
    </citation>
    <scope>PHOSPHORYLATION [LARGE SCALE ANALYSIS] AT SER-140</scope>
    <scope>IDENTIFICATION BY MASS SPECTROMETRY [LARGE SCALE ANALYSIS]</scope>
    <source>
        <tissue>Cervix carcinoma</tissue>
    </source>
</reference>
<reference key="10">
    <citation type="journal article" date="2011" name="BMC Syst. Biol.">
        <title>Initial characterization of the human central proteome.</title>
        <authorList>
            <person name="Burkard T.R."/>
            <person name="Planyavsky M."/>
            <person name="Kaupe I."/>
            <person name="Breitwieser F.P."/>
            <person name="Buerckstuemmer T."/>
            <person name="Bennett K.L."/>
            <person name="Superti-Furga G."/>
            <person name="Colinge J."/>
        </authorList>
    </citation>
    <scope>IDENTIFICATION BY MASS SPECTROMETRY [LARGE SCALE ANALYSIS]</scope>
</reference>
<reference key="11">
    <citation type="journal article" date="2013" name="Nat. Genet.">
        <title>Mutations in AP2S1 cause familial hypocalciuric hypercalcemia type 3.</title>
        <authorList>
            <person name="Nesbit M.A."/>
            <person name="Hannan F.M."/>
            <person name="Howles S.A."/>
            <person name="Reed A.A."/>
            <person name="Cranston T."/>
            <person name="Thakker C.E."/>
            <person name="Gregory L."/>
            <person name="Rimmer A.J."/>
            <person name="Rust N."/>
            <person name="Graham U."/>
            <person name="Morrison P.J."/>
            <person name="Hunter S.J."/>
            <person name="Whyte M.P."/>
            <person name="McVean G."/>
            <person name="Buck D."/>
            <person name="Thakker R.V."/>
        </authorList>
    </citation>
    <scope>FUNCTION</scope>
    <scope>INVOLVEMENT IN HHC3</scope>
    <scope>VARIANTS HHC3 CYS-15; HIS-15 AND LEU-15</scope>
    <scope>CHARACTERIZATION OF VARIANTS HHC3 CYS-15; HIS-15 AND LEU-15</scope>
</reference>
<reference key="12">
    <citation type="journal article" date="2014" name="J. Proteomics">
        <title>An enzyme assisted RP-RPLC approach for in-depth analysis of human liver phosphoproteome.</title>
        <authorList>
            <person name="Bian Y."/>
            <person name="Song C."/>
            <person name="Cheng K."/>
            <person name="Dong M."/>
            <person name="Wang F."/>
            <person name="Huang J."/>
            <person name="Sun D."/>
            <person name="Wang L."/>
            <person name="Ye M."/>
            <person name="Zou H."/>
        </authorList>
    </citation>
    <scope>IDENTIFICATION BY MASS SPECTROMETRY [LARGE SCALE ANALYSIS]</scope>
    <source>
        <tissue>Liver</tissue>
    </source>
</reference>
<reference key="13">
    <citation type="journal article" date="2021" name="Nat. Genet.">
        <title>A genome-wide atlas of co-essential modules assigns function to uncharacterized genes.</title>
        <authorList>
            <person name="Wainberg M."/>
            <person name="Kamber R.A."/>
            <person name="Balsubramani A."/>
            <person name="Meyers R.M."/>
            <person name="Sinnott-Armstrong N."/>
            <person name="Hornburg D."/>
            <person name="Jiang L."/>
            <person name="Chan J."/>
            <person name="Jian R."/>
            <person name="Gu M."/>
            <person name="Shcherbina A."/>
            <person name="Dubreuil M.M."/>
            <person name="Spees K."/>
            <person name="Meuleman W."/>
            <person name="Snyder M.P."/>
            <person name="Bassik M.C."/>
            <person name="Kundaje A."/>
        </authorList>
    </citation>
    <scope>FUNCTION</scope>
    <scope>SUBCELLULAR LOCATION</scope>
    <scope>INTERACTION WITH CCDC32</scope>
</reference>
<reference key="14">
    <citation type="journal article" date="2013" name="J. Clin. Endocrinol. Metab.">
        <title>Identification of AP2S1 mutation and effects of low calcium formula in an infant with hypercalcemia and hypercalciuria.</title>
        <authorList>
            <person name="Fujisawa Y."/>
            <person name="Yamaguchi R."/>
            <person name="Satake E."/>
            <person name="Ohtaka K."/>
            <person name="Nakanishi T."/>
            <person name="Ozono K."/>
            <person name="Ogata T."/>
        </authorList>
    </citation>
    <scope>VARIANT HHC3 LEU-15</scope>
</reference>
<name>AP2S1_HUMAN</name>
<sequence length="142" mass="17018">MIRFILIQNRAGKTRLAKWYMQFDDDEKQKLIEEVHAVVTVRDAKHTNFVEFRNFKIIYRRYAGLYFCICVDVNDNNLAYLEAIHNFVEVLNEYFHNVCELDLVFNFYKVYTVVDEMFLAGEIRETSQTKVLKQLLMLQSLE</sequence>
<protein>
    <recommendedName>
        <fullName>AP-2 complex subunit sigma</fullName>
    </recommendedName>
    <alternativeName>
        <fullName>Adaptor protein complex AP-2 subunit sigma</fullName>
    </alternativeName>
    <alternativeName>
        <fullName>Adaptor-related protein complex 2 subunit sigma</fullName>
    </alternativeName>
    <alternativeName>
        <fullName>Clathrin assembly protein 2 sigma small chain</fullName>
    </alternativeName>
    <alternativeName>
        <fullName>Clathrin coat assembly protein AP17</fullName>
    </alternativeName>
    <alternativeName>
        <fullName>Clathrin coat-associated protein AP17</fullName>
    </alternativeName>
    <alternativeName>
        <fullName>HA2 17 kDa subunit</fullName>
    </alternativeName>
    <alternativeName>
        <fullName>Plasma membrane adaptor AP-2 17 kDa protein</fullName>
    </alternativeName>
    <alternativeName>
        <fullName>Sigma2-adaptin</fullName>
    </alternativeName>
</protein>
<gene>
    <name evidence="12" type="primary">AP2S1</name>
    <name type="synonym">AP17</name>
    <name type="synonym">CLAPS2</name>
</gene>
<feature type="chain" id="PRO_0000193804" description="AP-2 complex subunit sigma">
    <location>
        <begin position="1"/>
        <end position="142"/>
    </location>
</feature>
<feature type="modified residue" description="Phosphoserine" evidence="13">
    <location>
        <position position="140"/>
    </location>
</feature>
<feature type="splice variant" id="VSP_017352" description="In isoform 2." evidence="9">
    <location>
        <begin position="52"/>
        <end position="89"/>
    </location>
</feature>
<feature type="sequence variant" id="VAR_069570" description="In HHC3; there is a rightward shift in Ca(2+)concentration-response curves with the mutant compared to wild-type, indicating a decrease in the sensitivity of cells expressing CASR to extracellular calcium; dbSNP:rs397514498." evidence="6 7">
    <original>R</original>
    <variation>C</variation>
    <location>
        <position position="15"/>
    </location>
</feature>
<feature type="sequence variant" id="VAR_069571" description="In HHC3; there is a rightward shift in Ca(2+)concentration-response curves with the mutant compared to wild-type, indicating a decrease in the sensitivity of cells expressing CASR to extracellular calcium; dbSNP:rs397514499." evidence="6">
    <original>R</original>
    <variation>H</variation>
    <location>
        <position position="15"/>
    </location>
</feature>
<feature type="sequence variant" id="VAR_069572" description="In HHC3; there is a rightward shift in Ca(2+)concentration-response curves with the mutant compared to wild-type, indicating a decrease in the sensitivity of cells expressing CASR to extracellular calcium; dbSNP:rs397514499." evidence="6 7">
    <original>R</original>
    <variation>L</variation>
    <location>
        <position position="15"/>
    </location>
</feature>
<feature type="sequence conflict" description="In Ref. 1; CAA65782 and 2; CAA09018." evidence="10" ref="1 2">
    <original>N</original>
    <variation>K</variation>
    <location>
        <position position="77"/>
    </location>
</feature>
<feature type="sequence conflict" description="In Ref. 1; CAA65782 and 2; CAA09018." evidence="10" ref="1 2">
    <original>A</original>
    <variation>G</variation>
    <location>
        <position position="83"/>
    </location>
</feature>
<feature type="strand" evidence="14">
    <location>
        <begin position="2"/>
        <end position="9"/>
    </location>
</feature>
<feature type="strand" evidence="14">
    <location>
        <begin position="14"/>
        <end position="19"/>
    </location>
</feature>
<feature type="helix" evidence="14">
    <location>
        <begin position="25"/>
        <end position="39"/>
    </location>
</feature>
<feature type="strand" evidence="14">
    <location>
        <begin position="48"/>
        <end position="52"/>
    </location>
</feature>
<feature type="strand" evidence="14">
    <location>
        <begin position="55"/>
        <end position="62"/>
    </location>
</feature>
<feature type="strand" evidence="14">
    <location>
        <begin position="65"/>
        <end position="71"/>
    </location>
</feature>
<feature type="helix" evidence="14">
    <location>
        <begin position="77"/>
        <end position="95"/>
    </location>
</feature>
<feature type="helix" evidence="14">
    <location>
        <begin position="102"/>
        <end position="105"/>
    </location>
</feature>
<feature type="helix" evidence="14">
    <location>
        <begin position="107"/>
        <end position="117"/>
    </location>
</feature>
<feature type="helix" evidence="14">
    <location>
        <begin position="128"/>
        <end position="140"/>
    </location>
</feature>
<comment type="function">
    <text evidence="1 3 4 5 6">Component of the adaptor protein complex 2 (AP-2). Adaptor protein complexes function in protein transport via transport vesicles in different membrane traffic pathways. Adaptor protein complexes are vesicle coat components and appear to be involved in cargo selection and vesicle formation. AP-2 is involved in clathrin-dependent endocytosis in which cargo proteins are incorporated into vesicles surrounded by clathrin (clathrin-coated vesicles, CCVs) which are destined for fusion with the early endosome. The clathrin lattice serves as a mechanical scaffold but is itself unable to bind directly to membrane components. Clathrin-associated adaptor protein (AP) complexes which can bind directly to both the clathrin lattice and to the lipid and protein components of membranes are considered to be the major clathrin adaptors contributing the CCV formation. AP-2 also serves as a cargo receptor to selectively sort the membrane proteins involved in receptor-mediated endocytosis. AP-2 seems to play a role in the recycling of synaptic vesicle membranes from the presynaptic surface. AP-2 recognizes Y-X-X-[FILMV] (Y-X-X-Phi) and [ED]-X-X-X-L-[LI] endocytosis signal motifs within the cytosolic tails of transmembrane cargo molecules. AP-2 may also play a role in maintaining normal post-endocytic trafficking through the ARF6-regulated, non-clathrin pathway. The AP-2 alpha and AP-2 sigma subunits are thought to contribute to the recognition of the [ED]-X-X-X-L-[LI] motif (By similarity). May also play a role in extracellular calcium homeostasis.</text>
</comment>
<comment type="subunit">
    <text evidence="8">Adaptor protein complex 2 (AP-2) is a heterotetramer composed of two large adaptins (alpha-type subunit AP2A1 or AP2A2 and beta-type subunit AP2B1), a medium adaptin (mu-type subunit AP2M1) and a small adaptin (sigma-type subunit AP2S1). Interacts with CCDC32; the interaction is direct and mediates association of CCDC32 with adaptor protein complex 2 (AP-2) (PubMed:33859415).</text>
</comment>
<comment type="interaction">
    <interactant intactId="EBI-297662">
        <id>P53680</id>
    </interactant>
    <interactant intactId="EBI-719906">
        <id>Q6PD74</id>
        <label>AAGAB</label>
    </interactant>
    <organismsDiffer>false</organismsDiffer>
    <experiments>11</experiments>
</comment>
<comment type="subcellular location">
    <subcellularLocation>
        <location evidence="2">Cell membrane</location>
    </subcellularLocation>
    <subcellularLocation>
        <location evidence="8">Membrane</location>
        <location evidence="8">Coated pit</location>
        <topology evidence="11">Peripheral membrane protein</topology>
        <orientation evidence="11">Cytoplasmic side</orientation>
    </subcellularLocation>
    <text evidence="2">AP-2 appears to be excluded from internalizing CCVs and to disengage from sites of endocytosis seconds before internalization of the nascent CCV.</text>
</comment>
<comment type="alternative products">
    <event type="alternative splicing"/>
    <isoform>
        <id>P53680-1</id>
        <name>1</name>
        <sequence type="displayed"/>
    </isoform>
    <isoform>
        <id>P53680-2</id>
        <name>2</name>
        <sequence type="described" ref="VSP_017352"/>
    </isoform>
</comment>
<comment type="disease" evidence="6 7">
    <disease id="DI-03662">
        <name>Hypocalciuric hypercalcemia, familial 3</name>
        <acronym>HHC3</acronym>
        <description>A form of hypocalciuric hypercalcemia, a disorder of mineral homeostasis that is transmitted as an autosomal dominant trait with a high degree of penetrance. It is characterized biochemically by lifelong elevation of serum calcium concentrations and is associated with inappropriately low urinary calcium excretion and a normal or mildly elevated circulating parathyroid hormone level. Hypermagnesemia is typically present. Affected individuals are usually asymptomatic and the disorder is considered benign. However, chondrocalcinosis and pancreatitis occur in some adults.</description>
        <dbReference type="MIM" id="600740"/>
    </disease>
    <text>The disease is caused by variants affecting the gene represented in this entry.</text>
</comment>
<comment type="similarity">
    <text evidence="10">Belongs to the adaptor complexes small subunit family.</text>
</comment>
<evidence type="ECO:0000250" key="1"/>
<evidence type="ECO:0000250" key="2">
    <source>
        <dbReference type="UniProtKB" id="P63010"/>
    </source>
</evidence>
<evidence type="ECO:0000269" key="3">
    <source>
    </source>
</evidence>
<evidence type="ECO:0000269" key="4">
    <source>
    </source>
</evidence>
<evidence type="ECO:0000269" key="5">
    <source>
    </source>
</evidence>
<evidence type="ECO:0000269" key="6">
    <source>
    </source>
</evidence>
<evidence type="ECO:0000269" key="7">
    <source>
    </source>
</evidence>
<evidence type="ECO:0000269" key="8">
    <source>
    </source>
</evidence>
<evidence type="ECO:0000303" key="9">
    <source>
    </source>
</evidence>
<evidence type="ECO:0000305" key="10"/>
<evidence type="ECO:0000305" key="11">
    <source>
    </source>
</evidence>
<evidence type="ECO:0000312" key="12">
    <source>
        <dbReference type="HGNC" id="HGNC:565"/>
    </source>
</evidence>
<evidence type="ECO:0007744" key="13">
    <source>
    </source>
</evidence>
<evidence type="ECO:0007829" key="14">
    <source>
        <dbReference type="PDB" id="6URI"/>
    </source>
</evidence>
<proteinExistence type="evidence at protein level"/>
<accession>P53680</accession>
<accession>B2R4Z4</accession>
<accession>O75977</accession>
<accession>Q6PK67</accession>
<organism>
    <name type="scientific">Homo sapiens</name>
    <name type="common">Human</name>
    <dbReference type="NCBI Taxonomy" id="9606"/>
    <lineage>
        <taxon>Eukaryota</taxon>
        <taxon>Metazoa</taxon>
        <taxon>Chordata</taxon>
        <taxon>Craniata</taxon>
        <taxon>Vertebrata</taxon>
        <taxon>Euteleostomi</taxon>
        <taxon>Mammalia</taxon>
        <taxon>Eutheria</taxon>
        <taxon>Euarchontoglires</taxon>
        <taxon>Primates</taxon>
        <taxon>Haplorrhini</taxon>
        <taxon>Catarrhini</taxon>
        <taxon>Hominidae</taxon>
        <taxon>Homo</taxon>
    </lineage>
</organism>
<dbReference type="EMBL" id="X97074">
    <property type="protein sequence ID" value="CAA65782.1"/>
    <property type="molecule type" value="mRNA"/>
</dbReference>
<dbReference type="EMBL" id="AJ010148">
    <property type="protein sequence ID" value="CAA09018.1"/>
    <property type="molecule type" value="mRNA"/>
</dbReference>
<dbReference type="EMBL" id="AJ010149">
    <property type="protein sequence ID" value="CAA09019.1"/>
    <property type="molecule type" value="mRNA"/>
</dbReference>
<dbReference type="EMBL" id="AK312003">
    <property type="protein sequence ID" value="BAG34941.1"/>
    <property type="molecule type" value="mRNA"/>
</dbReference>
<dbReference type="EMBL" id="CH471126">
    <property type="protein sequence ID" value="EAW57448.1"/>
    <property type="molecule type" value="Genomic_DNA"/>
</dbReference>
<dbReference type="EMBL" id="BC006337">
    <property type="protein sequence ID" value="AAH06337.1"/>
    <property type="molecule type" value="mRNA"/>
</dbReference>
<dbReference type="CCDS" id="CCDS12693.1">
    <molecule id="P53680-2"/>
</dbReference>
<dbReference type="CCDS" id="CCDS33062.1">
    <molecule id="P53680-1"/>
</dbReference>
<dbReference type="RefSeq" id="NP_001288005.1">
    <property type="nucleotide sequence ID" value="NM_001301076.1"/>
</dbReference>
<dbReference type="RefSeq" id="NP_001288007.1">
    <property type="nucleotide sequence ID" value="NM_001301078.1"/>
</dbReference>
<dbReference type="RefSeq" id="NP_001288010.1">
    <property type="nucleotide sequence ID" value="NM_001301081.1"/>
</dbReference>
<dbReference type="RefSeq" id="NP_004060.2">
    <molecule id="P53680-1"/>
    <property type="nucleotide sequence ID" value="NM_004069.6"/>
</dbReference>
<dbReference type="RefSeq" id="NP_067586.1">
    <molecule id="P53680-2"/>
    <property type="nucleotide sequence ID" value="NM_021575.5"/>
</dbReference>
<dbReference type="PDB" id="6URI">
    <property type="method" value="X-ray"/>
    <property type="resolution" value="3.00 A"/>
    <property type="chains" value="S=1-142"/>
</dbReference>
<dbReference type="PDBsum" id="6URI"/>
<dbReference type="SMR" id="P53680"/>
<dbReference type="BioGRID" id="107589">
    <property type="interactions" value="120"/>
</dbReference>
<dbReference type="ComplexPortal" id="CPX-5149">
    <property type="entry name" value="AP-2 Adaptor complex, alpha1 variant"/>
</dbReference>
<dbReference type="ComplexPortal" id="CPX-5150">
    <property type="entry name" value="AP-2 Adaptor complex, alpha2 variant"/>
</dbReference>
<dbReference type="FunCoup" id="P53680">
    <property type="interactions" value="2119"/>
</dbReference>
<dbReference type="IntAct" id="P53680">
    <property type="interactions" value="72"/>
</dbReference>
<dbReference type="MINT" id="P53680"/>
<dbReference type="STRING" id="9606.ENSP00000470176"/>
<dbReference type="TCDB" id="9.B.278.1.4">
    <property type="family name" value="the organellar-targeting adaptor protein complex (o-apc) family"/>
</dbReference>
<dbReference type="GlyGen" id="P53680">
    <property type="glycosylation" value="1 site, 1 O-linked glycan (1 site)"/>
</dbReference>
<dbReference type="iPTMnet" id="P53680"/>
<dbReference type="PhosphoSitePlus" id="P53680"/>
<dbReference type="SwissPalm" id="P53680"/>
<dbReference type="BioMuta" id="AP2S1"/>
<dbReference type="DMDM" id="51338780"/>
<dbReference type="jPOST" id="P53680"/>
<dbReference type="MassIVE" id="P53680"/>
<dbReference type="PaxDb" id="9606-ENSP00000263270"/>
<dbReference type="PeptideAtlas" id="P53680"/>
<dbReference type="ProteomicsDB" id="56611">
    <molecule id="P53680-1"/>
</dbReference>
<dbReference type="ProteomicsDB" id="56612">
    <molecule id="P53680-2"/>
</dbReference>
<dbReference type="Pumba" id="P53680"/>
<dbReference type="TopDownProteomics" id="P53680-1">
    <molecule id="P53680-1"/>
</dbReference>
<dbReference type="Antibodypedia" id="31506">
    <property type="antibodies" value="171 antibodies from 26 providers"/>
</dbReference>
<dbReference type="DNASU" id="1175"/>
<dbReference type="Ensembl" id="ENST00000263270.11">
    <molecule id="P53680-1"/>
    <property type="protein sequence ID" value="ENSP00000263270.6"/>
    <property type="gene ID" value="ENSG00000042753.12"/>
</dbReference>
<dbReference type="Ensembl" id="ENST00000601649.1">
    <molecule id="P53680-2"/>
    <property type="protein sequence ID" value="ENSP00000470898.1"/>
    <property type="gene ID" value="ENSG00000042753.12"/>
</dbReference>
<dbReference type="GeneID" id="1175"/>
<dbReference type="KEGG" id="hsa:1175"/>
<dbReference type="MANE-Select" id="ENST00000263270.11">
    <property type="protein sequence ID" value="ENSP00000263270.6"/>
    <property type="RefSeq nucleotide sequence ID" value="NM_004069.6"/>
    <property type="RefSeq protein sequence ID" value="NP_004060.2"/>
</dbReference>
<dbReference type="UCSC" id="uc002pft.2">
    <molecule id="P53680-1"/>
    <property type="organism name" value="human"/>
</dbReference>
<dbReference type="AGR" id="HGNC:565"/>
<dbReference type="CTD" id="1175"/>
<dbReference type="DisGeNET" id="1175"/>
<dbReference type="GeneCards" id="AP2S1"/>
<dbReference type="HGNC" id="HGNC:565">
    <property type="gene designation" value="AP2S1"/>
</dbReference>
<dbReference type="HPA" id="ENSG00000042753">
    <property type="expression patterns" value="Low tissue specificity"/>
</dbReference>
<dbReference type="MalaCards" id="AP2S1"/>
<dbReference type="MIM" id="600740">
    <property type="type" value="phenotype"/>
</dbReference>
<dbReference type="MIM" id="602242">
    <property type="type" value="gene"/>
</dbReference>
<dbReference type="neXtProt" id="NX_P53680"/>
<dbReference type="OpenTargets" id="ENSG00000042753"/>
<dbReference type="Orphanet" id="101050">
    <property type="disease" value="Familial hypocalciuric hypercalcemia type 3"/>
</dbReference>
<dbReference type="PharmGKB" id="PA24856"/>
<dbReference type="VEuPathDB" id="HostDB:ENSG00000042753"/>
<dbReference type="eggNOG" id="KOG0935">
    <property type="taxonomic scope" value="Eukaryota"/>
</dbReference>
<dbReference type="GeneTree" id="ENSGT00970000193421"/>
<dbReference type="InParanoid" id="P53680"/>
<dbReference type="OMA" id="QSNFVEY"/>
<dbReference type="OrthoDB" id="371463at2759"/>
<dbReference type="PAN-GO" id="P53680">
    <property type="GO annotations" value="2 GO annotations based on evolutionary models"/>
</dbReference>
<dbReference type="PhylomeDB" id="P53680"/>
<dbReference type="TreeFam" id="TF300139"/>
<dbReference type="PathwayCommons" id="P53680"/>
<dbReference type="Reactome" id="R-HSA-167590">
    <property type="pathway name" value="Nef Mediated CD4 Down-regulation"/>
</dbReference>
<dbReference type="Reactome" id="R-HSA-177504">
    <property type="pathway name" value="Retrograde neurotrophin signalling"/>
</dbReference>
<dbReference type="Reactome" id="R-HSA-182218">
    <property type="pathway name" value="Nef Mediated CD8 Down-regulation"/>
</dbReference>
<dbReference type="Reactome" id="R-HSA-2132295">
    <property type="pathway name" value="MHC class II antigen presentation"/>
</dbReference>
<dbReference type="Reactome" id="R-HSA-3928665">
    <property type="pathway name" value="EPH-ephrin mediated repulsion of cells"/>
</dbReference>
<dbReference type="Reactome" id="R-HSA-416993">
    <molecule id="P53680-1"/>
    <property type="pathway name" value="Trafficking of GluR2-containing AMPA receptors"/>
</dbReference>
<dbReference type="Reactome" id="R-HSA-437239">
    <property type="pathway name" value="Recycling pathway of L1"/>
</dbReference>
<dbReference type="Reactome" id="R-HSA-5099900">
    <property type="pathway name" value="WNT5A-dependent internalization of FZD4"/>
</dbReference>
<dbReference type="Reactome" id="R-HSA-5140745">
    <property type="pathway name" value="WNT5A-dependent internalization of FZD2, FZD5 and ROR2"/>
</dbReference>
<dbReference type="Reactome" id="R-HSA-8856825">
    <property type="pathway name" value="Cargo recognition for clathrin-mediated endocytosis"/>
</dbReference>
<dbReference type="Reactome" id="R-HSA-8856828">
    <property type="pathway name" value="Clathrin-mediated endocytosis"/>
</dbReference>
<dbReference type="Reactome" id="R-HSA-8866427">
    <property type="pathway name" value="VLDLR internalisation and degradation"/>
</dbReference>
<dbReference type="Reactome" id="R-HSA-8964038">
    <property type="pathway name" value="LDL clearance"/>
</dbReference>
<dbReference type="Reactome" id="R-HSA-9679191">
    <property type="pathway name" value="Potential therapeutics for SARS"/>
</dbReference>
<dbReference type="SignaLink" id="P53680"/>
<dbReference type="SIGNOR" id="P53680"/>
<dbReference type="BioGRID-ORCS" id="1175">
    <property type="hits" value="621 hits in 1176 CRISPR screens"/>
</dbReference>
<dbReference type="ChiTaRS" id="AP2S1">
    <property type="organism name" value="human"/>
</dbReference>
<dbReference type="GeneWiki" id="AP2S1"/>
<dbReference type="GenomeRNAi" id="1175"/>
<dbReference type="Pharos" id="P53680">
    <property type="development level" value="Tbio"/>
</dbReference>
<dbReference type="PRO" id="PR:P53680"/>
<dbReference type="Proteomes" id="UP000005640">
    <property type="component" value="Chromosome 19"/>
</dbReference>
<dbReference type="RNAct" id="P53680">
    <property type="molecule type" value="protein"/>
</dbReference>
<dbReference type="Bgee" id="ENSG00000042753">
    <property type="expression patterns" value="Expressed in lower esophagus mucosa and 216 other cell types or tissues"/>
</dbReference>
<dbReference type="ExpressionAtlas" id="P53680">
    <property type="expression patterns" value="baseline and differential"/>
</dbReference>
<dbReference type="GO" id="GO:0030122">
    <property type="term" value="C:AP-2 adaptor complex"/>
    <property type="evidence" value="ECO:0000304"/>
    <property type="project" value="UniProtKB"/>
</dbReference>
<dbReference type="GO" id="GO:0045334">
    <property type="term" value="C:clathrin-coated endocytic vesicle"/>
    <property type="evidence" value="ECO:0000303"/>
    <property type="project" value="ARUK-UCL"/>
</dbReference>
<dbReference type="GO" id="GO:0030669">
    <property type="term" value="C:clathrin-coated endocytic vesicle membrane"/>
    <property type="evidence" value="ECO:0000304"/>
    <property type="project" value="Reactome"/>
</dbReference>
<dbReference type="GO" id="GO:0009898">
    <property type="term" value="C:cytoplasmic side of plasma membrane"/>
    <property type="evidence" value="ECO:0000303"/>
    <property type="project" value="ComplexPortal"/>
</dbReference>
<dbReference type="GO" id="GO:0005829">
    <property type="term" value="C:cytosol"/>
    <property type="evidence" value="ECO:0000304"/>
    <property type="project" value="Reactome"/>
</dbReference>
<dbReference type="GO" id="GO:0030666">
    <property type="term" value="C:endocytic vesicle membrane"/>
    <property type="evidence" value="ECO:0000304"/>
    <property type="project" value="Reactome"/>
</dbReference>
<dbReference type="GO" id="GO:0036020">
    <property type="term" value="C:endolysosome membrane"/>
    <property type="evidence" value="ECO:0000304"/>
    <property type="project" value="Reactome"/>
</dbReference>
<dbReference type="GO" id="GO:0043231">
    <property type="term" value="C:intracellular membrane-bounded organelle"/>
    <property type="evidence" value="ECO:0000318"/>
    <property type="project" value="GO_Central"/>
</dbReference>
<dbReference type="GO" id="GO:0005886">
    <property type="term" value="C:plasma membrane"/>
    <property type="evidence" value="ECO:0000304"/>
    <property type="project" value="Reactome"/>
</dbReference>
<dbReference type="GO" id="GO:0098794">
    <property type="term" value="C:postsynapse"/>
    <property type="evidence" value="ECO:0007669"/>
    <property type="project" value="GOC"/>
</dbReference>
<dbReference type="GO" id="GO:0098793">
    <property type="term" value="C:presynapse"/>
    <property type="evidence" value="ECO:0007669"/>
    <property type="project" value="GOC"/>
</dbReference>
<dbReference type="GO" id="GO:0035615">
    <property type="term" value="F:clathrin adaptor activity"/>
    <property type="evidence" value="ECO:0007669"/>
    <property type="project" value="InterPro"/>
</dbReference>
<dbReference type="GO" id="GO:0048268">
    <property type="term" value="P:clathrin coat assembly"/>
    <property type="evidence" value="ECO:0000304"/>
    <property type="project" value="UniProtKB"/>
</dbReference>
<dbReference type="GO" id="GO:0072583">
    <property type="term" value="P:clathrin-dependent endocytosis"/>
    <property type="evidence" value="ECO:0000304"/>
    <property type="project" value="BHF-UCL"/>
</dbReference>
<dbReference type="GO" id="GO:0006886">
    <property type="term" value="P:intracellular protein transport"/>
    <property type="evidence" value="ECO:0007669"/>
    <property type="project" value="InterPro"/>
</dbReference>
<dbReference type="GO" id="GO:0098884">
    <property type="term" value="P:postsynaptic neurotransmitter receptor internalization"/>
    <property type="evidence" value="ECO:0000303"/>
    <property type="project" value="ComplexPortal"/>
</dbReference>
<dbReference type="GO" id="GO:0030100">
    <property type="term" value="P:regulation of endocytosis"/>
    <property type="evidence" value="ECO:0000304"/>
    <property type="project" value="UniProtKB"/>
</dbReference>
<dbReference type="GO" id="GO:0048488">
    <property type="term" value="P:synaptic vesicle endocytosis"/>
    <property type="evidence" value="ECO:0000314"/>
    <property type="project" value="SynGO"/>
</dbReference>
<dbReference type="GO" id="GO:0016192">
    <property type="term" value="P:vesicle-mediated transport"/>
    <property type="evidence" value="ECO:0000318"/>
    <property type="project" value="GO_Central"/>
</dbReference>
<dbReference type="CDD" id="cd14833">
    <property type="entry name" value="AP2_sigma"/>
    <property type="match status" value="1"/>
</dbReference>
<dbReference type="FunFam" id="3.30.450.60:FF:000004">
    <property type="entry name" value="AP complex subunit sigma"/>
    <property type="match status" value="1"/>
</dbReference>
<dbReference type="Gene3D" id="3.30.450.60">
    <property type="match status" value="1"/>
</dbReference>
<dbReference type="InterPro" id="IPR016635">
    <property type="entry name" value="AP_complex_ssu"/>
</dbReference>
<dbReference type="InterPro" id="IPR022775">
    <property type="entry name" value="AP_mu_sigma_su"/>
</dbReference>
<dbReference type="InterPro" id="IPR027156">
    <property type="entry name" value="APS2"/>
</dbReference>
<dbReference type="InterPro" id="IPR000804">
    <property type="entry name" value="Clathrin_sm-chain_CS"/>
</dbReference>
<dbReference type="InterPro" id="IPR011012">
    <property type="entry name" value="Longin-like_dom_sf"/>
</dbReference>
<dbReference type="PANTHER" id="PTHR11753">
    <property type="entry name" value="ADAPTOR COMPLEXES SMALL SUBUNIT FAMILY"/>
    <property type="match status" value="1"/>
</dbReference>
<dbReference type="Pfam" id="PF01217">
    <property type="entry name" value="Clat_adaptor_s"/>
    <property type="match status" value="1"/>
</dbReference>
<dbReference type="PIRSF" id="PIRSF015588">
    <property type="entry name" value="AP_complex_sigma"/>
    <property type="match status" value="1"/>
</dbReference>
<dbReference type="SUPFAM" id="SSF64356">
    <property type="entry name" value="SNARE-like"/>
    <property type="match status" value="1"/>
</dbReference>
<dbReference type="PROSITE" id="PS00989">
    <property type="entry name" value="CLAT_ADAPTOR_S"/>
    <property type="match status" value="1"/>
</dbReference>